<feature type="chain" id="PRO_0000137998" description="Glycerol-3-phosphate dehydrogenase [NAD(P)+]">
    <location>
        <begin position="1"/>
        <end position="329"/>
    </location>
</feature>
<feature type="active site" description="Proton acceptor" evidence="1">
    <location>
        <position position="189"/>
    </location>
</feature>
<feature type="binding site" evidence="1">
    <location>
        <position position="10"/>
    </location>
    <ligand>
        <name>NADPH</name>
        <dbReference type="ChEBI" id="CHEBI:57783"/>
    </ligand>
</feature>
<feature type="binding site" evidence="1">
    <location>
        <position position="11"/>
    </location>
    <ligand>
        <name>NADPH</name>
        <dbReference type="ChEBI" id="CHEBI:57783"/>
    </ligand>
</feature>
<feature type="binding site" evidence="1">
    <location>
        <position position="31"/>
    </location>
    <ligand>
        <name>NADPH</name>
        <dbReference type="ChEBI" id="CHEBI:57783"/>
    </ligand>
</feature>
<feature type="binding site" evidence="1">
    <location>
        <position position="105"/>
    </location>
    <ligand>
        <name>NADPH</name>
        <dbReference type="ChEBI" id="CHEBI:57783"/>
    </ligand>
</feature>
<feature type="binding site" evidence="1">
    <location>
        <position position="105"/>
    </location>
    <ligand>
        <name>sn-glycerol 3-phosphate</name>
        <dbReference type="ChEBI" id="CHEBI:57597"/>
    </ligand>
</feature>
<feature type="binding site" evidence="1">
    <location>
        <position position="134"/>
    </location>
    <ligand>
        <name>sn-glycerol 3-phosphate</name>
        <dbReference type="ChEBI" id="CHEBI:57597"/>
    </ligand>
</feature>
<feature type="binding site" evidence="1">
    <location>
        <position position="136"/>
    </location>
    <ligand>
        <name>sn-glycerol 3-phosphate</name>
        <dbReference type="ChEBI" id="CHEBI:57597"/>
    </ligand>
</feature>
<feature type="binding site" evidence="1">
    <location>
        <position position="138"/>
    </location>
    <ligand>
        <name>NADPH</name>
        <dbReference type="ChEBI" id="CHEBI:57783"/>
    </ligand>
</feature>
<feature type="binding site" evidence="1">
    <location>
        <position position="189"/>
    </location>
    <ligand>
        <name>sn-glycerol 3-phosphate</name>
        <dbReference type="ChEBI" id="CHEBI:57597"/>
    </ligand>
</feature>
<feature type="binding site" evidence="1">
    <location>
        <position position="242"/>
    </location>
    <ligand>
        <name>sn-glycerol 3-phosphate</name>
        <dbReference type="ChEBI" id="CHEBI:57597"/>
    </ligand>
</feature>
<feature type="binding site" evidence="1">
    <location>
        <position position="252"/>
    </location>
    <ligand>
        <name>sn-glycerol 3-phosphate</name>
        <dbReference type="ChEBI" id="CHEBI:57597"/>
    </ligand>
</feature>
<feature type="binding site" evidence="1">
    <location>
        <position position="253"/>
    </location>
    <ligand>
        <name>NADPH</name>
        <dbReference type="ChEBI" id="CHEBI:57783"/>
    </ligand>
</feature>
<feature type="binding site" evidence="1">
    <location>
        <position position="253"/>
    </location>
    <ligand>
        <name>sn-glycerol 3-phosphate</name>
        <dbReference type="ChEBI" id="CHEBI:57597"/>
    </ligand>
</feature>
<feature type="binding site" evidence="1">
    <location>
        <position position="254"/>
    </location>
    <ligand>
        <name>sn-glycerol 3-phosphate</name>
        <dbReference type="ChEBI" id="CHEBI:57597"/>
    </ligand>
</feature>
<feature type="binding site" evidence="1">
    <location>
        <position position="277"/>
    </location>
    <ligand>
        <name>NADPH</name>
        <dbReference type="ChEBI" id="CHEBI:57783"/>
    </ligand>
</feature>
<feature type="binding site" evidence="1">
    <location>
        <position position="279"/>
    </location>
    <ligand>
        <name>NADPH</name>
        <dbReference type="ChEBI" id="CHEBI:57783"/>
    </ligand>
</feature>
<reference key="1">
    <citation type="journal article" date="2000" name="Nature">
        <title>Complete DNA sequence of a serogroup A strain of Neisseria meningitidis Z2491.</title>
        <authorList>
            <person name="Parkhill J."/>
            <person name="Achtman M."/>
            <person name="James K.D."/>
            <person name="Bentley S.D."/>
            <person name="Churcher C.M."/>
            <person name="Klee S.R."/>
            <person name="Morelli G."/>
            <person name="Basham D."/>
            <person name="Brown D."/>
            <person name="Chillingworth T."/>
            <person name="Davies R.M."/>
            <person name="Davis P."/>
            <person name="Devlin K."/>
            <person name="Feltwell T."/>
            <person name="Hamlin N."/>
            <person name="Holroyd S."/>
            <person name="Jagels K."/>
            <person name="Leather S."/>
            <person name="Moule S."/>
            <person name="Mungall K.L."/>
            <person name="Quail M.A."/>
            <person name="Rajandream M.A."/>
            <person name="Rutherford K.M."/>
            <person name="Simmonds M."/>
            <person name="Skelton J."/>
            <person name="Whitehead S."/>
            <person name="Spratt B.G."/>
            <person name="Barrell B.G."/>
        </authorList>
    </citation>
    <scope>NUCLEOTIDE SEQUENCE [LARGE SCALE GENOMIC DNA]</scope>
    <source>
        <strain>DSM 15465 / Z2491</strain>
    </source>
</reference>
<dbReference type="EC" id="1.1.1.94" evidence="1"/>
<dbReference type="EMBL" id="AL157959">
    <property type="protein sequence ID" value="CAM07668.1"/>
    <property type="molecule type" value="Genomic_DNA"/>
</dbReference>
<dbReference type="PIR" id="E81953">
    <property type="entry name" value="E81953"/>
</dbReference>
<dbReference type="RefSeq" id="WP_002243132.1">
    <property type="nucleotide sequence ID" value="NC_003116.1"/>
</dbReference>
<dbReference type="SMR" id="Q9JWH0"/>
<dbReference type="EnsemblBacteria" id="CAM07668">
    <property type="protein sequence ID" value="CAM07668"/>
    <property type="gene ID" value="NMA0375"/>
</dbReference>
<dbReference type="KEGG" id="nma:NMA0375"/>
<dbReference type="HOGENOM" id="CLU_033449_0_2_4"/>
<dbReference type="UniPathway" id="UPA00940"/>
<dbReference type="Proteomes" id="UP000000626">
    <property type="component" value="Chromosome"/>
</dbReference>
<dbReference type="GO" id="GO:0005829">
    <property type="term" value="C:cytosol"/>
    <property type="evidence" value="ECO:0007669"/>
    <property type="project" value="TreeGrafter"/>
</dbReference>
<dbReference type="GO" id="GO:0047952">
    <property type="term" value="F:glycerol-3-phosphate dehydrogenase [NAD(P)+] activity"/>
    <property type="evidence" value="ECO:0007669"/>
    <property type="project" value="UniProtKB-UniRule"/>
</dbReference>
<dbReference type="GO" id="GO:0051287">
    <property type="term" value="F:NAD binding"/>
    <property type="evidence" value="ECO:0007669"/>
    <property type="project" value="InterPro"/>
</dbReference>
<dbReference type="GO" id="GO:0005975">
    <property type="term" value="P:carbohydrate metabolic process"/>
    <property type="evidence" value="ECO:0007669"/>
    <property type="project" value="InterPro"/>
</dbReference>
<dbReference type="GO" id="GO:0046167">
    <property type="term" value="P:glycerol-3-phosphate biosynthetic process"/>
    <property type="evidence" value="ECO:0007669"/>
    <property type="project" value="UniProtKB-UniRule"/>
</dbReference>
<dbReference type="GO" id="GO:0046168">
    <property type="term" value="P:glycerol-3-phosphate catabolic process"/>
    <property type="evidence" value="ECO:0007669"/>
    <property type="project" value="InterPro"/>
</dbReference>
<dbReference type="GO" id="GO:0006650">
    <property type="term" value="P:glycerophospholipid metabolic process"/>
    <property type="evidence" value="ECO:0007669"/>
    <property type="project" value="UniProtKB-UniRule"/>
</dbReference>
<dbReference type="GO" id="GO:0008654">
    <property type="term" value="P:phospholipid biosynthetic process"/>
    <property type="evidence" value="ECO:0007669"/>
    <property type="project" value="UniProtKB-KW"/>
</dbReference>
<dbReference type="FunFam" id="1.10.1040.10:FF:000001">
    <property type="entry name" value="Glycerol-3-phosphate dehydrogenase [NAD(P)+]"/>
    <property type="match status" value="1"/>
</dbReference>
<dbReference type="FunFam" id="3.40.50.720:FF:000019">
    <property type="entry name" value="Glycerol-3-phosphate dehydrogenase [NAD(P)+]"/>
    <property type="match status" value="1"/>
</dbReference>
<dbReference type="Gene3D" id="1.10.1040.10">
    <property type="entry name" value="N-(1-d-carboxylethyl)-l-norvaline Dehydrogenase, domain 2"/>
    <property type="match status" value="1"/>
</dbReference>
<dbReference type="Gene3D" id="3.40.50.720">
    <property type="entry name" value="NAD(P)-binding Rossmann-like Domain"/>
    <property type="match status" value="1"/>
</dbReference>
<dbReference type="HAMAP" id="MF_00394">
    <property type="entry name" value="NAD_Glyc3P_dehydrog"/>
    <property type="match status" value="1"/>
</dbReference>
<dbReference type="InterPro" id="IPR008927">
    <property type="entry name" value="6-PGluconate_DH-like_C_sf"/>
</dbReference>
<dbReference type="InterPro" id="IPR013328">
    <property type="entry name" value="6PGD_dom2"/>
</dbReference>
<dbReference type="InterPro" id="IPR006168">
    <property type="entry name" value="G3P_DH_NAD-dep"/>
</dbReference>
<dbReference type="InterPro" id="IPR006109">
    <property type="entry name" value="G3P_DH_NAD-dep_C"/>
</dbReference>
<dbReference type="InterPro" id="IPR011128">
    <property type="entry name" value="G3P_DH_NAD-dep_N"/>
</dbReference>
<dbReference type="InterPro" id="IPR036291">
    <property type="entry name" value="NAD(P)-bd_dom_sf"/>
</dbReference>
<dbReference type="NCBIfam" id="NF000940">
    <property type="entry name" value="PRK00094.1-2"/>
    <property type="match status" value="1"/>
</dbReference>
<dbReference type="NCBIfam" id="NF000942">
    <property type="entry name" value="PRK00094.1-4"/>
    <property type="match status" value="1"/>
</dbReference>
<dbReference type="PANTHER" id="PTHR11728">
    <property type="entry name" value="GLYCEROL-3-PHOSPHATE DEHYDROGENASE"/>
    <property type="match status" value="1"/>
</dbReference>
<dbReference type="PANTHER" id="PTHR11728:SF1">
    <property type="entry name" value="GLYCEROL-3-PHOSPHATE DEHYDROGENASE [NAD(+)] 2, CHLOROPLASTIC"/>
    <property type="match status" value="1"/>
</dbReference>
<dbReference type="Pfam" id="PF07479">
    <property type="entry name" value="NAD_Gly3P_dh_C"/>
    <property type="match status" value="1"/>
</dbReference>
<dbReference type="Pfam" id="PF01210">
    <property type="entry name" value="NAD_Gly3P_dh_N"/>
    <property type="match status" value="1"/>
</dbReference>
<dbReference type="PIRSF" id="PIRSF000114">
    <property type="entry name" value="Glycerol-3-P_dh"/>
    <property type="match status" value="1"/>
</dbReference>
<dbReference type="PRINTS" id="PR00077">
    <property type="entry name" value="GPDHDRGNASE"/>
</dbReference>
<dbReference type="SUPFAM" id="SSF48179">
    <property type="entry name" value="6-phosphogluconate dehydrogenase C-terminal domain-like"/>
    <property type="match status" value="1"/>
</dbReference>
<dbReference type="SUPFAM" id="SSF51735">
    <property type="entry name" value="NAD(P)-binding Rossmann-fold domains"/>
    <property type="match status" value="1"/>
</dbReference>
<dbReference type="PROSITE" id="PS00957">
    <property type="entry name" value="NAD_G3PDH"/>
    <property type="match status" value="1"/>
</dbReference>
<sequence length="329" mass="35310">MKITVIGAGSWGTALALHFSQHGNRVSLWTRNADQVRQMQEARENKRGLPGFSFPETLEVCADLADALKDSGLVLIVTSVAGLRSSAELLKQYGAGHLPVLAACKGFEQDTGLLTFQVLKEVLPDNKKIGVLSGPSFAQELAKQLPCAVVLASENQEWVEELVPQLNTSVMRLYGSTDVIGVAVGGAVKNVMAIATGLSDGLEYGLNARAALVTRGLAEITRLASAMGAQPKTMMGLAGIGDLILTCTGALSRNRRVGLGLAEGKELHQVLVEIGHVSEGVSTIEEVFNTACKYQIDMPITQTLLQLIRKEMTPQQVVERLMERSARFE</sequence>
<accession>Q9JWH0</accession>
<accession>A1IPJ8</accession>
<evidence type="ECO:0000255" key="1">
    <source>
        <dbReference type="HAMAP-Rule" id="MF_00394"/>
    </source>
</evidence>
<proteinExistence type="inferred from homology"/>
<name>GPDA_NEIMA</name>
<organism>
    <name type="scientific">Neisseria meningitidis serogroup A / serotype 4A (strain DSM 15465 / Z2491)</name>
    <dbReference type="NCBI Taxonomy" id="122587"/>
    <lineage>
        <taxon>Bacteria</taxon>
        <taxon>Pseudomonadati</taxon>
        <taxon>Pseudomonadota</taxon>
        <taxon>Betaproteobacteria</taxon>
        <taxon>Neisseriales</taxon>
        <taxon>Neisseriaceae</taxon>
        <taxon>Neisseria</taxon>
    </lineage>
</organism>
<comment type="function">
    <text evidence="1">Catalyzes the reduction of the glycolytic intermediate dihydroxyacetone phosphate (DHAP) to sn-glycerol 3-phosphate (G3P), the key precursor for phospholipid synthesis.</text>
</comment>
<comment type="catalytic activity">
    <reaction evidence="1">
        <text>sn-glycerol 3-phosphate + NAD(+) = dihydroxyacetone phosphate + NADH + H(+)</text>
        <dbReference type="Rhea" id="RHEA:11092"/>
        <dbReference type="ChEBI" id="CHEBI:15378"/>
        <dbReference type="ChEBI" id="CHEBI:57540"/>
        <dbReference type="ChEBI" id="CHEBI:57597"/>
        <dbReference type="ChEBI" id="CHEBI:57642"/>
        <dbReference type="ChEBI" id="CHEBI:57945"/>
        <dbReference type="EC" id="1.1.1.94"/>
    </reaction>
    <physiologicalReaction direction="right-to-left" evidence="1">
        <dbReference type="Rhea" id="RHEA:11094"/>
    </physiologicalReaction>
</comment>
<comment type="catalytic activity">
    <reaction evidence="1">
        <text>sn-glycerol 3-phosphate + NADP(+) = dihydroxyacetone phosphate + NADPH + H(+)</text>
        <dbReference type="Rhea" id="RHEA:11096"/>
        <dbReference type="ChEBI" id="CHEBI:15378"/>
        <dbReference type="ChEBI" id="CHEBI:57597"/>
        <dbReference type="ChEBI" id="CHEBI:57642"/>
        <dbReference type="ChEBI" id="CHEBI:57783"/>
        <dbReference type="ChEBI" id="CHEBI:58349"/>
        <dbReference type="EC" id="1.1.1.94"/>
    </reaction>
    <physiologicalReaction direction="right-to-left" evidence="1">
        <dbReference type="Rhea" id="RHEA:11098"/>
    </physiologicalReaction>
</comment>
<comment type="pathway">
    <text evidence="1">Membrane lipid metabolism; glycerophospholipid metabolism.</text>
</comment>
<comment type="subcellular location">
    <subcellularLocation>
        <location evidence="1">Cytoplasm</location>
    </subcellularLocation>
</comment>
<comment type="similarity">
    <text evidence="1">Belongs to the NAD-dependent glycerol-3-phosphate dehydrogenase family.</text>
</comment>
<gene>
    <name evidence="1" type="primary">gpsA</name>
    <name type="ordered locus">NMA0375</name>
</gene>
<protein>
    <recommendedName>
        <fullName evidence="1">Glycerol-3-phosphate dehydrogenase [NAD(P)+]</fullName>
        <ecNumber evidence="1">1.1.1.94</ecNumber>
    </recommendedName>
    <alternativeName>
        <fullName evidence="1">NAD(P)(+)-dependent glycerol-3-phosphate dehydrogenase</fullName>
    </alternativeName>
    <alternativeName>
        <fullName evidence="1">NAD(P)H-dependent dihydroxyacetone-phosphate reductase</fullName>
    </alternativeName>
</protein>
<keyword id="KW-0963">Cytoplasm</keyword>
<keyword id="KW-0444">Lipid biosynthesis</keyword>
<keyword id="KW-0443">Lipid metabolism</keyword>
<keyword id="KW-0520">NAD</keyword>
<keyword id="KW-0521">NADP</keyword>
<keyword id="KW-0547">Nucleotide-binding</keyword>
<keyword id="KW-0560">Oxidoreductase</keyword>
<keyword id="KW-0594">Phospholipid biosynthesis</keyword>
<keyword id="KW-1208">Phospholipid metabolism</keyword>